<name>Y1327_NEIMB</name>
<organism>
    <name type="scientific">Neisseria meningitidis serogroup B (strain ATCC BAA-335 / MC58)</name>
    <dbReference type="NCBI Taxonomy" id="122586"/>
    <lineage>
        <taxon>Bacteria</taxon>
        <taxon>Pseudomonadati</taxon>
        <taxon>Pseudomonadota</taxon>
        <taxon>Betaproteobacteria</taxon>
        <taxon>Neisseriales</taxon>
        <taxon>Neisseriaceae</taxon>
        <taxon>Neisseria</taxon>
    </lineage>
</organism>
<accession>Q9JZ25</accession>
<sequence>MNNPDLPYRQALECLSQKQYNFTEVRRLLTEAFSAGHPAAAFELAKHLMDADSPYQDREQGMEMLRIAAEQGHPYARYNLAYIQELEGAPPETLIPLYRPLAEEGLPEAQVRLMYLLYASRHFEEALEWAKTSAKNNNPHGQYLLAQYCRYGTPPDFETAHLLYRKSAAQGLPEAHWQLGLQYRFGQGTKVDTAQAVNHLRAAAQQGYIPAYTPLAELILPTAPDEAVHWFQQAAQENDPDAHAALADIYLQGKHLERNHKLALHHAEAAAAERHPEGLRILGDICRYGLGIAPDTEKARHYYRQAAEAGSLSAYQKLISDSALNHPDQYGGIKDSAIRRQRAERLYQKAQALHYGLQCAPEYAAALKLYTEAAELGHSKAQTNLGSMYYFGQGMTADYNEARKWFEKAAAKKDSMAFYNLACIHYSGHGVEPDKEKACRYLQEAINNGYGQKSVLQELLQQWQNAV</sequence>
<proteinExistence type="evidence at protein level"/>
<protein>
    <recommendedName>
        <fullName>Uncharacterized protein NMB1327</fullName>
    </recommendedName>
</protein>
<keyword id="KW-1185">Reference proteome</keyword>
<keyword id="KW-0677">Repeat</keyword>
<dbReference type="EMBL" id="AE002098">
    <property type="protein sequence ID" value="AAF41702.1"/>
    <property type="molecule type" value="Genomic_DNA"/>
</dbReference>
<dbReference type="PIR" id="B81095">
    <property type="entry name" value="B81095"/>
</dbReference>
<dbReference type="RefSeq" id="NP_274346.1">
    <property type="nucleotide sequence ID" value="NC_003112.2"/>
</dbReference>
<dbReference type="RefSeq" id="WP_002225161.1">
    <property type="nucleotide sequence ID" value="NC_003112.2"/>
</dbReference>
<dbReference type="SMR" id="Q9JZ25"/>
<dbReference type="STRING" id="122586.NMB1327"/>
<dbReference type="PaxDb" id="122586-NMB1327"/>
<dbReference type="KEGG" id="nme:NMB1327"/>
<dbReference type="PATRIC" id="fig|122586.8.peg.1665"/>
<dbReference type="HOGENOM" id="CLU_000288_36_14_4"/>
<dbReference type="InParanoid" id="Q9JZ25"/>
<dbReference type="OrthoDB" id="5365194at2"/>
<dbReference type="Proteomes" id="UP000000425">
    <property type="component" value="Chromosome"/>
</dbReference>
<dbReference type="Gene3D" id="1.25.40.10">
    <property type="entry name" value="Tetratricopeptide repeat domain"/>
    <property type="match status" value="4"/>
</dbReference>
<dbReference type="InterPro" id="IPR006597">
    <property type="entry name" value="Sel1-like"/>
</dbReference>
<dbReference type="InterPro" id="IPR050767">
    <property type="entry name" value="Sel1_AlgK"/>
</dbReference>
<dbReference type="InterPro" id="IPR011990">
    <property type="entry name" value="TPR-like_helical_dom_sf"/>
</dbReference>
<dbReference type="PANTHER" id="PTHR11102:SF160">
    <property type="entry name" value="ERAD-ASSOCIATED E3 UBIQUITIN-PROTEIN LIGASE COMPONENT HRD3"/>
    <property type="match status" value="1"/>
</dbReference>
<dbReference type="PANTHER" id="PTHR11102">
    <property type="entry name" value="SEL-1-LIKE PROTEIN"/>
    <property type="match status" value="1"/>
</dbReference>
<dbReference type="Pfam" id="PF08238">
    <property type="entry name" value="Sel1"/>
    <property type="match status" value="9"/>
</dbReference>
<dbReference type="SMART" id="SM00671">
    <property type="entry name" value="SEL1"/>
    <property type="match status" value="9"/>
</dbReference>
<dbReference type="SUPFAM" id="SSF81901">
    <property type="entry name" value="HCP-like"/>
    <property type="match status" value="4"/>
</dbReference>
<gene>
    <name type="ordered locus">NMB1327</name>
</gene>
<comment type="miscellaneous">
    <text>Present in outer membrane vesicle formulations which are used as vaccines in human.</text>
</comment>
<reference key="1">
    <citation type="journal article" date="2000" name="Science">
        <title>Complete genome sequence of Neisseria meningitidis serogroup B strain MC58.</title>
        <authorList>
            <person name="Tettelin H."/>
            <person name="Saunders N.J."/>
            <person name="Heidelberg J.F."/>
            <person name="Jeffries A.C."/>
            <person name="Nelson K.E."/>
            <person name="Eisen J.A."/>
            <person name="Ketchum K.A."/>
            <person name="Hood D.W."/>
            <person name="Peden J.F."/>
            <person name="Dodson R.J."/>
            <person name="Nelson W.C."/>
            <person name="Gwinn M.L."/>
            <person name="DeBoy R.T."/>
            <person name="Peterson J.D."/>
            <person name="Hickey E.K."/>
            <person name="Haft D.H."/>
            <person name="Salzberg S.L."/>
            <person name="White O."/>
            <person name="Fleischmann R.D."/>
            <person name="Dougherty B.A."/>
            <person name="Mason T.M."/>
            <person name="Ciecko A."/>
            <person name="Parksey D.S."/>
            <person name="Blair E."/>
            <person name="Cittone H."/>
            <person name="Clark E.B."/>
            <person name="Cotton M.D."/>
            <person name="Utterback T.R."/>
            <person name="Khouri H.M."/>
            <person name="Qin H."/>
            <person name="Vamathevan J.J."/>
            <person name="Gill J."/>
            <person name="Scarlato V."/>
            <person name="Masignani V."/>
            <person name="Pizza M."/>
            <person name="Grandi G."/>
            <person name="Sun L."/>
            <person name="Smith H.O."/>
            <person name="Fraser C.M."/>
            <person name="Moxon E.R."/>
            <person name="Rappuoli R."/>
            <person name="Venter J.C."/>
        </authorList>
    </citation>
    <scope>NUCLEOTIDE SEQUENCE [LARGE SCALE GENOMIC DNA]</scope>
    <source>
        <strain>ATCC BAA-335 / MC58</strain>
    </source>
</reference>
<reference key="2">
    <citation type="journal article" date="2006" name="Proteomics">
        <title>Proteomic analysis of a meningococcal outer membrane vesicle vaccine prepared from the group B strain NZ98/254.</title>
        <authorList>
            <person name="Vipond C."/>
            <person name="Suker J."/>
            <person name="Jones C."/>
            <person name="Tang C."/>
            <person name="Feavers I.M."/>
            <person name="Wheeler J.X."/>
        </authorList>
    </citation>
    <scope>IDENTIFICATION BY MASS SPECTROMETRY [LARGE SCALE ANALYSIS]</scope>
    <source>
        <strain>NZ98/254 / Serogroup B</strain>
    </source>
</reference>
<feature type="chain" id="PRO_0000320333" description="Uncharacterized protein NMB1327">
    <location>
        <begin position="1"/>
        <end position="467"/>
    </location>
</feature>
<feature type="repeat" description="Sel1-like 1">
    <location>
        <begin position="38"/>
        <end position="73"/>
    </location>
</feature>
<feature type="repeat" description="Sel1-like 2">
    <location>
        <begin position="107"/>
        <end position="138"/>
    </location>
</feature>
<feature type="repeat" description="Sel1-like 3">
    <location>
        <begin position="139"/>
        <end position="172"/>
    </location>
</feature>
<feature type="repeat" description="Sel1-like 4">
    <location>
        <begin position="173"/>
        <end position="208"/>
    </location>
</feature>
<feature type="repeat" description="Sel1-like 5">
    <location>
        <begin position="240"/>
        <end position="275"/>
    </location>
</feature>
<feature type="repeat" description="Sel1-like 6">
    <location>
        <begin position="276"/>
        <end position="311"/>
    </location>
</feature>
<feature type="repeat" description="Sel1-like 7">
    <location>
        <begin position="343"/>
        <end position="378"/>
    </location>
</feature>
<feature type="repeat" description="Sel1-like 8">
    <location>
        <begin position="379"/>
        <end position="414"/>
    </location>
</feature>
<feature type="repeat" description="Sel1-like 9">
    <location>
        <begin position="415"/>
        <end position="450"/>
    </location>
</feature>